<proteinExistence type="inferred from homology"/>
<organism>
    <name type="scientific">Dehalococcoides mccartyi (strain CBDB1)</name>
    <dbReference type="NCBI Taxonomy" id="255470"/>
    <lineage>
        <taxon>Bacteria</taxon>
        <taxon>Bacillati</taxon>
        <taxon>Chloroflexota</taxon>
        <taxon>Dehalococcoidia</taxon>
        <taxon>Dehalococcoidales</taxon>
        <taxon>Dehalococcoidaceae</taxon>
        <taxon>Dehalococcoides</taxon>
    </lineage>
</organism>
<reference key="1">
    <citation type="journal article" date="2005" name="Nat. Biotechnol.">
        <title>Genome sequence of the chlorinated compound-respiring bacterium Dehalococcoides species strain CBDB1.</title>
        <authorList>
            <person name="Kube M."/>
            <person name="Beck A."/>
            <person name="Zinder S.H."/>
            <person name="Kuhl H."/>
            <person name="Reinhardt R."/>
            <person name="Adrian L."/>
        </authorList>
    </citation>
    <scope>NUCLEOTIDE SEQUENCE [LARGE SCALE GENOMIC DNA]</scope>
    <source>
        <strain>CBDB1</strain>
    </source>
</reference>
<sequence length="251" mass="27175">MSGHSKWATIKHAKGAADAKRGQLFTKLSREIIFAAKQGGPSPEGNARLRLAIQKAKDSRMPSDNIERAIKKGSGELEGTTVIEMILEGYGPGGVAVLVNGMSDNRNRTVSDVRHMFSKGGGSLAESGAVSWIFEAKGVIGVETAGLDTDELSLKAIDMGAEDVNTDEGYMEIYTAMPDMEKIRQQLETQGVTIDSAEINMVPKNTVKLDEETAMQVLKLLDKLEELDDVQTVSSNADFDPEVVEKYHSQA</sequence>
<feature type="chain" id="PRO_0000257056" description="Probable transcriptional regulatory protein cbdbA400">
    <location>
        <begin position="1"/>
        <end position="251"/>
    </location>
</feature>
<protein>
    <recommendedName>
        <fullName evidence="1">Probable transcriptional regulatory protein cbdbA400</fullName>
    </recommendedName>
</protein>
<keyword id="KW-0963">Cytoplasm</keyword>
<keyword id="KW-0238">DNA-binding</keyword>
<keyword id="KW-0804">Transcription</keyword>
<keyword id="KW-0805">Transcription regulation</keyword>
<comment type="subcellular location">
    <subcellularLocation>
        <location evidence="1">Cytoplasm</location>
    </subcellularLocation>
</comment>
<comment type="similarity">
    <text evidence="1">Belongs to the TACO1 family.</text>
</comment>
<evidence type="ECO:0000255" key="1">
    <source>
        <dbReference type="HAMAP-Rule" id="MF_00693"/>
    </source>
</evidence>
<gene>
    <name type="ordered locus">cbdbA400</name>
</gene>
<accession>Q3ZZK4</accession>
<name>Y400_DEHMC</name>
<dbReference type="EMBL" id="AJ965256">
    <property type="protein sequence ID" value="CAI82609.1"/>
    <property type="molecule type" value="Genomic_DNA"/>
</dbReference>
<dbReference type="RefSeq" id="WP_011308966.1">
    <property type="nucleotide sequence ID" value="NC_007356.1"/>
</dbReference>
<dbReference type="SMR" id="Q3ZZK4"/>
<dbReference type="KEGG" id="deh:cbdbA400"/>
<dbReference type="HOGENOM" id="CLU_062974_2_2_0"/>
<dbReference type="Proteomes" id="UP000000433">
    <property type="component" value="Chromosome"/>
</dbReference>
<dbReference type="GO" id="GO:0005829">
    <property type="term" value="C:cytosol"/>
    <property type="evidence" value="ECO:0007669"/>
    <property type="project" value="TreeGrafter"/>
</dbReference>
<dbReference type="GO" id="GO:0003677">
    <property type="term" value="F:DNA binding"/>
    <property type="evidence" value="ECO:0007669"/>
    <property type="project" value="UniProtKB-UniRule"/>
</dbReference>
<dbReference type="GO" id="GO:0006355">
    <property type="term" value="P:regulation of DNA-templated transcription"/>
    <property type="evidence" value="ECO:0007669"/>
    <property type="project" value="UniProtKB-UniRule"/>
</dbReference>
<dbReference type="FunFam" id="1.10.10.200:FF:000002">
    <property type="entry name" value="Probable transcriptional regulatory protein CLM62_37755"/>
    <property type="match status" value="1"/>
</dbReference>
<dbReference type="FunFam" id="3.30.70.980:FF:000002">
    <property type="entry name" value="Probable transcriptional regulatory protein YebC"/>
    <property type="match status" value="1"/>
</dbReference>
<dbReference type="Gene3D" id="1.10.10.200">
    <property type="match status" value="1"/>
</dbReference>
<dbReference type="Gene3D" id="3.30.70.980">
    <property type="match status" value="2"/>
</dbReference>
<dbReference type="HAMAP" id="MF_00693">
    <property type="entry name" value="Transcrip_reg_TACO1"/>
    <property type="match status" value="1"/>
</dbReference>
<dbReference type="InterPro" id="IPR017856">
    <property type="entry name" value="Integrase-like_N"/>
</dbReference>
<dbReference type="InterPro" id="IPR048300">
    <property type="entry name" value="TACO1_YebC-like_2nd/3rd_dom"/>
</dbReference>
<dbReference type="InterPro" id="IPR049083">
    <property type="entry name" value="TACO1_YebC_N"/>
</dbReference>
<dbReference type="InterPro" id="IPR002876">
    <property type="entry name" value="Transcrip_reg_TACO1-like"/>
</dbReference>
<dbReference type="InterPro" id="IPR026564">
    <property type="entry name" value="Transcrip_reg_TACO1-like_dom3"/>
</dbReference>
<dbReference type="InterPro" id="IPR029072">
    <property type="entry name" value="YebC-like"/>
</dbReference>
<dbReference type="NCBIfam" id="NF001030">
    <property type="entry name" value="PRK00110.1"/>
    <property type="match status" value="1"/>
</dbReference>
<dbReference type="NCBIfam" id="NF009044">
    <property type="entry name" value="PRK12378.1"/>
    <property type="match status" value="1"/>
</dbReference>
<dbReference type="NCBIfam" id="TIGR01033">
    <property type="entry name" value="YebC/PmpR family DNA-binding transcriptional regulator"/>
    <property type="match status" value="1"/>
</dbReference>
<dbReference type="PANTHER" id="PTHR12532:SF6">
    <property type="entry name" value="TRANSCRIPTIONAL REGULATORY PROTEIN YEBC-RELATED"/>
    <property type="match status" value="1"/>
</dbReference>
<dbReference type="PANTHER" id="PTHR12532">
    <property type="entry name" value="TRANSLATIONAL ACTIVATOR OF CYTOCHROME C OXIDASE 1"/>
    <property type="match status" value="1"/>
</dbReference>
<dbReference type="Pfam" id="PF20772">
    <property type="entry name" value="TACO1_YebC_N"/>
    <property type="match status" value="1"/>
</dbReference>
<dbReference type="Pfam" id="PF01709">
    <property type="entry name" value="Transcrip_reg"/>
    <property type="match status" value="1"/>
</dbReference>
<dbReference type="SUPFAM" id="SSF75625">
    <property type="entry name" value="YebC-like"/>
    <property type="match status" value="1"/>
</dbReference>